<dbReference type="EC" id="2.4.2.-"/>
<dbReference type="EMBL" id="LT708304">
    <property type="protein sequence ID" value="SIU02451.1"/>
    <property type="molecule type" value="Genomic_DNA"/>
</dbReference>
<dbReference type="RefSeq" id="NP_857459.1">
    <property type="nucleotide sequence ID" value="NC_002945.3"/>
</dbReference>
<dbReference type="RefSeq" id="WP_003420638.1">
    <property type="nucleotide sequence ID" value="NC_002945.4"/>
</dbReference>
<dbReference type="SMR" id="Q7TVN4"/>
<dbReference type="GeneID" id="45427795"/>
<dbReference type="KEGG" id="mbo:BQ2027_MB3822"/>
<dbReference type="PATRIC" id="fig|233413.5.peg.4180"/>
<dbReference type="Proteomes" id="UP000001419">
    <property type="component" value="Chromosome"/>
</dbReference>
<dbReference type="GO" id="GO:0005886">
    <property type="term" value="C:plasma membrane"/>
    <property type="evidence" value="ECO:0007669"/>
    <property type="project" value="UniProtKB-SubCell"/>
</dbReference>
<dbReference type="GO" id="GO:0052636">
    <property type="term" value="F:arabinosyltransferase activity"/>
    <property type="evidence" value="ECO:0007669"/>
    <property type="project" value="InterPro"/>
</dbReference>
<dbReference type="GO" id="GO:0071766">
    <property type="term" value="P:Actinobacterium-type cell wall biogenesis"/>
    <property type="evidence" value="ECO:0007669"/>
    <property type="project" value="InterPro"/>
</dbReference>
<dbReference type="GO" id="GO:0071555">
    <property type="term" value="P:cell wall organization"/>
    <property type="evidence" value="ECO:0007669"/>
    <property type="project" value="UniProtKB-KW"/>
</dbReference>
<dbReference type="FunFam" id="2.60.120.610:FF:000001">
    <property type="entry name" value="Probable arabinosyltransferase C"/>
    <property type="match status" value="1"/>
</dbReference>
<dbReference type="Gene3D" id="3.40.190.160">
    <property type="match status" value="1"/>
</dbReference>
<dbReference type="Gene3D" id="2.60.120.610">
    <property type="entry name" value="arabinofuranosyltransferase like domain"/>
    <property type="match status" value="1"/>
</dbReference>
<dbReference type="Gene3D" id="2.60.120.940">
    <property type="entry name" value="EmbC, C-terminal domain, subdomain 2"/>
    <property type="match status" value="1"/>
</dbReference>
<dbReference type="InterPro" id="IPR032731">
    <property type="entry name" value="Arabino_trans_C"/>
</dbReference>
<dbReference type="InterPro" id="IPR042486">
    <property type="entry name" value="Arabino_trans_C_2"/>
</dbReference>
<dbReference type="InterPro" id="IPR007680">
    <property type="entry name" value="Arabino_trans_central"/>
</dbReference>
<dbReference type="InterPro" id="IPR040920">
    <property type="entry name" value="Arabino_trans_N"/>
</dbReference>
<dbReference type="InterPro" id="IPR027451">
    <property type="entry name" value="EmbABC_dom1"/>
</dbReference>
<dbReference type="Pfam" id="PF14896">
    <property type="entry name" value="Arabino_trans_C"/>
    <property type="match status" value="1"/>
</dbReference>
<dbReference type="Pfam" id="PF17689">
    <property type="entry name" value="Arabino_trans_N"/>
    <property type="match status" value="1"/>
</dbReference>
<dbReference type="Pfam" id="PF04602">
    <property type="entry name" value="Arabinose_trans"/>
    <property type="match status" value="1"/>
</dbReference>
<sequence length="1094" mass="117502">MATEAAPPRIAVRLPSTSVRDAGANYRIARYVAVVAGLLGAVLAIATPLLPVNQTTAQLNWPQNGTFASVEAPLIGYVATDLNITVPCQAAAGLAGSQNTGKTVLLSTVPKQAPKAVDRGLLLQRANDDLVLVVRNVPLVTAPLSQVLGPTCQRLTFTAHADRVAAEFVGLVQGPNAEHPGAPLRGERSGYDFRPQIVGVFTDLAGPAPPGLSFSASVDTRYSSSPTPLKMAAMILGVALTGAALVALHILDTADGMRHRRFLPARWWSIGGLDTLVIAVLVWWHFVGANTSDDGYILTMARVSEHAGYMANYYRWFGTPEAPFGWYYDLLALWAHVSTASIWMRLPTLAMALTCWWVISREVIPRLGHAVKTSRAAAWTAAGMFLAVWLPLDNGLRPEPIIALGILLTWCSVERAVATSRLLPVAIACIIGALTLFSGPTGIASIGALLVAIGPLRTILHRRSRRFGVLPLVAPILAAATVTAIPIFRDQTFAGEIQANLLKRAVGPSLKWFDEHIRYERLFMASPDGSIARRFAVLALVLALAVSVAMSLRKGRIPGTAAGPSRRIIGITIISFLAMMFTPTKWTHHFGVFAGLAGSLGALAAVAVTGAAMRSRRNRTVFAAVVVFVLALSFASVNGWWYVSNFGVPWSNSFPKWRWSLTTALLELTVLVLLLAAWFHFVANGDGRRTARPTRFRARLAGIVQSPLAIATWLLVLFEVVSLTQAMISQYPAWSVGRSNLQALAGKTCGLAEDVLVELDPNAGMLAPVTAPLADALGAGLSEAFTPNGIPADVTADPVMERPGDRSFLNDDGLITGSEPGTEGGTTAAPGINGSRARLPYNLDPARTPVLGSWRAGVQVPAMLRSGWYRLPTNEQRDRAPLLVVTAAGRFDSREVRLQWATDEQAAAGHHGGSMEFADVGAAPAWRNLRAPLSAIPSTATQVRLVADDQDLAPQHWIALTPPRIPRVRTLQNVVGAADPVFLDWLVGLAFPCQRPFGHQYGVDETPKWRILPDRFGAEANSPVMDHNGGGPLGITELLMRATTVASYLKDDWFRDWGALQRLTPYYPDAQPADLNLGTVTRSGLWSPAPLRRG</sequence>
<proteinExistence type="inferred from homology"/>
<reference key="1">
    <citation type="journal article" date="2003" name="Proc. Natl. Acad. Sci. U.S.A.">
        <title>The complete genome sequence of Mycobacterium bovis.</title>
        <authorList>
            <person name="Garnier T."/>
            <person name="Eiglmeier K."/>
            <person name="Camus J.-C."/>
            <person name="Medina N."/>
            <person name="Mansoor H."/>
            <person name="Pryor M."/>
            <person name="Duthoy S."/>
            <person name="Grondin S."/>
            <person name="Lacroix C."/>
            <person name="Monsempe C."/>
            <person name="Simon S."/>
            <person name="Harris B."/>
            <person name="Atkin R."/>
            <person name="Doggett J."/>
            <person name="Mayes R."/>
            <person name="Keating L."/>
            <person name="Wheeler P.R."/>
            <person name="Parkhill J."/>
            <person name="Barrell B.G."/>
            <person name="Cole S.T."/>
            <person name="Gordon S.V."/>
            <person name="Hewinson R.G."/>
        </authorList>
    </citation>
    <scope>NUCLEOTIDE SEQUENCE [LARGE SCALE GENOMIC DNA]</scope>
    <source>
        <strain>ATCC BAA-935 / AF2122/97</strain>
    </source>
</reference>
<reference key="2">
    <citation type="journal article" date="2017" name="Genome Announc.">
        <title>Updated reference genome sequence and annotation of Mycobacterium bovis AF2122/97.</title>
        <authorList>
            <person name="Malone K.M."/>
            <person name="Farrell D."/>
            <person name="Stuber T.P."/>
            <person name="Schubert O.T."/>
            <person name="Aebersold R."/>
            <person name="Robbe-Austerman S."/>
            <person name="Gordon S.V."/>
        </authorList>
    </citation>
    <scope>NUCLEOTIDE SEQUENCE [LARGE SCALE GENOMIC DNA]</scope>
    <scope>GENOME REANNOTATION</scope>
    <source>
        <strain>ATCC BAA-935 / AF2122/97</strain>
    </source>
</reference>
<accession>Q7TVN4</accession>
<accession>A0A1R3Y593</accession>
<accession>X2BPF1</accession>
<keyword id="KW-1003">Cell membrane</keyword>
<keyword id="KW-0961">Cell wall biogenesis/degradation</keyword>
<keyword id="KW-0328">Glycosyltransferase</keyword>
<keyword id="KW-0472">Membrane</keyword>
<keyword id="KW-1185">Reference proteome</keyword>
<keyword id="KW-0808">Transferase</keyword>
<keyword id="KW-0812">Transmembrane</keyword>
<keyword id="KW-1133">Transmembrane helix</keyword>
<organism>
    <name type="scientific">Mycobacterium bovis (strain ATCC BAA-935 / AF2122/97)</name>
    <dbReference type="NCBI Taxonomy" id="233413"/>
    <lineage>
        <taxon>Bacteria</taxon>
        <taxon>Bacillati</taxon>
        <taxon>Actinomycetota</taxon>
        <taxon>Actinomycetes</taxon>
        <taxon>Mycobacteriales</taxon>
        <taxon>Mycobacteriaceae</taxon>
        <taxon>Mycobacterium</taxon>
        <taxon>Mycobacterium tuberculosis complex</taxon>
    </lineage>
</organism>
<evidence type="ECO:0000255" key="1"/>
<evidence type="ECO:0000256" key="2">
    <source>
        <dbReference type="SAM" id="MobiDB-lite"/>
    </source>
</evidence>
<evidence type="ECO:0000305" key="3"/>
<name>EMBC_MYCBO</name>
<protein>
    <recommendedName>
        <fullName>Probable arabinosyltransferase C</fullName>
        <ecNumber>2.4.2.-</ecNumber>
    </recommendedName>
</protein>
<feature type="chain" id="PRO_0000220570" description="Probable arabinosyltransferase C">
    <location>
        <begin position="1"/>
        <end position="1094"/>
    </location>
</feature>
<feature type="transmembrane region" description="Helical" evidence="1">
    <location>
        <begin position="28"/>
        <end position="50"/>
    </location>
</feature>
<feature type="transmembrane region" description="Helical" evidence="1">
    <location>
        <begin position="232"/>
        <end position="251"/>
    </location>
</feature>
<feature type="transmembrane region" description="Helical" evidence="1">
    <location>
        <begin position="264"/>
        <end position="286"/>
    </location>
</feature>
<feature type="transmembrane region" description="Helical" evidence="1">
    <location>
        <begin position="341"/>
        <end position="360"/>
    </location>
</feature>
<feature type="transmembrane region" description="Helical" evidence="1">
    <location>
        <begin position="373"/>
        <end position="392"/>
    </location>
</feature>
<feature type="transmembrane region" description="Helical" evidence="1">
    <location>
        <begin position="431"/>
        <end position="453"/>
    </location>
</feature>
<feature type="transmembrane region" description="Helical" evidence="1">
    <location>
        <begin position="466"/>
        <end position="488"/>
    </location>
</feature>
<feature type="transmembrane region" description="Helical" evidence="1">
    <location>
        <begin position="530"/>
        <end position="552"/>
    </location>
</feature>
<feature type="transmembrane region" description="Helical" evidence="1">
    <location>
        <begin position="565"/>
        <end position="582"/>
    </location>
</feature>
<feature type="transmembrane region" description="Helical" evidence="1">
    <location>
        <begin position="586"/>
        <end position="608"/>
    </location>
</feature>
<feature type="transmembrane region" description="Helical" evidence="1">
    <location>
        <begin position="620"/>
        <end position="642"/>
    </location>
</feature>
<feature type="transmembrane region" description="Helical" evidence="1">
    <location>
        <begin position="657"/>
        <end position="679"/>
    </location>
</feature>
<feature type="transmembrane region" description="Helical" evidence="1">
    <location>
        <begin position="700"/>
        <end position="722"/>
    </location>
</feature>
<feature type="region of interest" description="Disordered" evidence="2">
    <location>
        <begin position="817"/>
        <end position="836"/>
    </location>
</feature>
<feature type="compositionally biased region" description="Low complexity" evidence="2">
    <location>
        <begin position="817"/>
        <end position="831"/>
    </location>
</feature>
<gene>
    <name type="primary">embC</name>
    <name type="ordered locus">BQ2027_MB3822</name>
</gene>
<comment type="function">
    <text>Arabinosyl transferase responsible for the polymerization of arabinose into the arabinan of arabinogalactan.</text>
</comment>
<comment type="subcellular location">
    <subcellularLocation>
        <location evidence="3">Cell membrane</location>
        <topology evidence="3">Multi-pass membrane protein</topology>
    </subcellularLocation>
</comment>
<comment type="similarity">
    <text evidence="3">Belongs to the emb family.</text>
</comment>